<protein>
    <recommendedName>
        <fullName evidence="1">Methionyl-tRNA formyltransferase</fullName>
        <ecNumber evidence="1">2.1.2.9</ecNumber>
    </recommendedName>
</protein>
<name>FMT_GEODF</name>
<dbReference type="EC" id="2.1.2.9" evidence="1"/>
<dbReference type="EMBL" id="CP001390">
    <property type="protein sequence ID" value="ACM19314.1"/>
    <property type="molecule type" value="Genomic_DNA"/>
</dbReference>
<dbReference type="RefSeq" id="WP_012646043.1">
    <property type="nucleotide sequence ID" value="NC_011979.1"/>
</dbReference>
<dbReference type="SMR" id="B9M2D5"/>
<dbReference type="STRING" id="316067.Geob_0952"/>
<dbReference type="KEGG" id="geo:Geob_0952"/>
<dbReference type="eggNOG" id="COG0223">
    <property type="taxonomic scope" value="Bacteria"/>
</dbReference>
<dbReference type="HOGENOM" id="CLU_033347_1_1_7"/>
<dbReference type="OrthoDB" id="9802815at2"/>
<dbReference type="Proteomes" id="UP000007721">
    <property type="component" value="Chromosome"/>
</dbReference>
<dbReference type="GO" id="GO:0005829">
    <property type="term" value="C:cytosol"/>
    <property type="evidence" value="ECO:0007669"/>
    <property type="project" value="TreeGrafter"/>
</dbReference>
<dbReference type="GO" id="GO:0004479">
    <property type="term" value="F:methionyl-tRNA formyltransferase activity"/>
    <property type="evidence" value="ECO:0007669"/>
    <property type="project" value="UniProtKB-UniRule"/>
</dbReference>
<dbReference type="CDD" id="cd08646">
    <property type="entry name" value="FMT_core_Met-tRNA-FMT_N"/>
    <property type="match status" value="1"/>
</dbReference>
<dbReference type="CDD" id="cd08704">
    <property type="entry name" value="Met_tRNA_FMT_C"/>
    <property type="match status" value="1"/>
</dbReference>
<dbReference type="FunFam" id="3.40.50.12230:FF:000001">
    <property type="entry name" value="Methionyl-tRNA formyltransferase"/>
    <property type="match status" value="1"/>
</dbReference>
<dbReference type="Gene3D" id="3.40.50.12230">
    <property type="match status" value="1"/>
</dbReference>
<dbReference type="HAMAP" id="MF_00182">
    <property type="entry name" value="Formyl_trans"/>
    <property type="match status" value="1"/>
</dbReference>
<dbReference type="InterPro" id="IPR005794">
    <property type="entry name" value="Fmt"/>
</dbReference>
<dbReference type="InterPro" id="IPR005793">
    <property type="entry name" value="Formyl_trans_C"/>
</dbReference>
<dbReference type="InterPro" id="IPR002376">
    <property type="entry name" value="Formyl_transf_N"/>
</dbReference>
<dbReference type="InterPro" id="IPR036477">
    <property type="entry name" value="Formyl_transf_N_sf"/>
</dbReference>
<dbReference type="InterPro" id="IPR011034">
    <property type="entry name" value="Formyl_transferase-like_C_sf"/>
</dbReference>
<dbReference type="InterPro" id="IPR044135">
    <property type="entry name" value="Met-tRNA-FMT_C"/>
</dbReference>
<dbReference type="InterPro" id="IPR041711">
    <property type="entry name" value="Met-tRNA-FMT_N"/>
</dbReference>
<dbReference type="NCBIfam" id="TIGR00460">
    <property type="entry name" value="fmt"/>
    <property type="match status" value="1"/>
</dbReference>
<dbReference type="PANTHER" id="PTHR11138">
    <property type="entry name" value="METHIONYL-TRNA FORMYLTRANSFERASE"/>
    <property type="match status" value="1"/>
</dbReference>
<dbReference type="PANTHER" id="PTHR11138:SF5">
    <property type="entry name" value="METHIONYL-TRNA FORMYLTRANSFERASE, MITOCHONDRIAL"/>
    <property type="match status" value="1"/>
</dbReference>
<dbReference type="Pfam" id="PF02911">
    <property type="entry name" value="Formyl_trans_C"/>
    <property type="match status" value="1"/>
</dbReference>
<dbReference type="Pfam" id="PF00551">
    <property type="entry name" value="Formyl_trans_N"/>
    <property type="match status" value="1"/>
</dbReference>
<dbReference type="SUPFAM" id="SSF50486">
    <property type="entry name" value="FMT C-terminal domain-like"/>
    <property type="match status" value="1"/>
</dbReference>
<dbReference type="SUPFAM" id="SSF53328">
    <property type="entry name" value="Formyltransferase"/>
    <property type="match status" value="1"/>
</dbReference>
<accession>B9M2D5</accession>
<keyword id="KW-0648">Protein biosynthesis</keyword>
<keyword id="KW-1185">Reference proteome</keyword>
<keyword id="KW-0808">Transferase</keyword>
<organism>
    <name type="scientific">Geotalea daltonii (strain DSM 22248 / JCM 15807 / FRC-32)</name>
    <name type="common">Geobacter daltonii</name>
    <dbReference type="NCBI Taxonomy" id="316067"/>
    <lineage>
        <taxon>Bacteria</taxon>
        <taxon>Pseudomonadati</taxon>
        <taxon>Thermodesulfobacteriota</taxon>
        <taxon>Desulfuromonadia</taxon>
        <taxon>Geobacterales</taxon>
        <taxon>Geobacteraceae</taxon>
        <taxon>Geotalea</taxon>
    </lineage>
</organism>
<sequence length="312" mass="33981">MRIIFMGTPEFACPTLQKLIDRKEEVVAVITQPDRPRGRGQQTLPPPVKVLAEQHGIPVMQPVKVRVPEVVESIRELAPDLIVVVAFGQILPKSLLDIPPYGCINVHASLLPRWRGAAPLNWCIIDGDTETGVTTMMMDVGLDTGDMLLKKTTSIDPDENTQSLHDRLSIIGADALAETLDLLNAGKLVREKQDDALTCYASMLKKEDGLIDWSRDPRSVKNLVRGMTPWPGTYTFLDGKMLKVYRVRIAEGEGEPGTVIGAGRQGLEVACTGGSVIIEELQLEGKKRLPAGDFLAGYKIATGAKLGHKDAA</sequence>
<comment type="function">
    <text evidence="1">Attaches a formyl group to the free amino group of methionyl-tRNA(fMet). The formyl group appears to play a dual role in the initiator identity of N-formylmethionyl-tRNA by promoting its recognition by IF2 and preventing the misappropriation of this tRNA by the elongation apparatus.</text>
</comment>
<comment type="catalytic activity">
    <reaction evidence="1">
        <text>L-methionyl-tRNA(fMet) + (6R)-10-formyltetrahydrofolate = N-formyl-L-methionyl-tRNA(fMet) + (6S)-5,6,7,8-tetrahydrofolate + H(+)</text>
        <dbReference type="Rhea" id="RHEA:24380"/>
        <dbReference type="Rhea" id="RHEA-COMP:9952"/>
        <dbReference type="Rhea" id="RHEA-COMP:9953"/>
        <dbReference type="ChEBI" id="CHEBI:15378"/>
        <dbReference type="ChEBI" id="CHEBI:57453"/>
        <dbReference type="ChEBI" id="CHEBI:78530"/>
        <dbReference type="ChEBI" id="CHEBI:78844"/>
        <dbReference type="ChEBI" id="CHEBI:195366"/>
        <dbReference type="EC" id="2.1.2.9"/>
    </reaction>
</comment>
<comment type="similarity">
    <text evidence="1">Belongs to the Fmt family.</text>
</comment>
<evidence type="ECO:0000255" key="1">
    <source>
        <dbReference type="HAMAP-Rule" id="MF_00182"/>
    </source>
</evidence>
<proteinExistence type="inferred from homology"/>
<reference key="1">
    <citation type="submission" date="2009-01" db="EMBL/GenBank/DDBJ databases">
        <title>Complete sequence of Geobacter sp. FRC-32.</title>
        <authorList>
            <consortium name="US DOE Joint Genome Institute"/>
            <person name="Lucas S."/>
            <person name="Copeland A."/>
            <person name="Lapidus A."/>
            <person name="Glavina del Rio T."/>
            <person name="Dalin E."/>
            <person name="Tice H."/>
            <person name="Bruce D."/>
            <person name="Goodwin L."/>
            <person name="Pitluck S."/>
            <person name="Saunders E."/>
            <person name="Brettin T."/>
            <person name="Detter J.C."/>
            <person name="Han C."/>
            <person name="Larimer F."/>
            <person name="Land M."/>
            <person name="Hauser L."/>
            <person name="Kyrpides N."/>
            <person name="Ovchinnikova G."/>
            <person name="Kostka J."/>
            <person name="Richardson P."/>
        </authorList>
    </citation>
    <scope>NUCLEOTIDE SEQUENCE [LARGE SCALE GENOMIC DNA]</scope>
    <source>
        <strain>DSM 22248 / JCM 15807 / FRC-32</strain>
    </source>
</reference>
<gene>
    <name evidence="1" type="primary">fmt</name>
    <name type="ordered locus">Geob_0952</name>
</gene>
<feature type="chain" id="PRO_1000203860" description="Methionyl-tRNA formyltransferase">
    <location>
        <begin position="1"/>
        <end position="312"/>
    </location>
</feature>
<feature type="binding site" evidence="1">
    <location>
        <begin position="109"/>
        <end position="112"/>
    </location>
    <ligand>
        <name>(6S)-5,6,7,8-tetrahydrofolate</name>
        <dbReference type="ChEBI" id="CHEBI:57453"/>
    </ligand>
</feature>